<protein>
    <recommendedName>
        <fullName evidence="1">Photosystem I P700 chlorophyll a apoprotein A1</fullName>
        <ecNumber evidence="1">1.97.1.12</ecNumber>
    </recommendedName>
    <alternativeName>
        <fullName evidence="1">PsaA</fullName>
    </alternativeName>
</protein>
<proteinExistence type="inferred from homology"/>
<feature type="chain" id="PRO_1000201159" description="Photosystem I P700 chlorophyll a apoprotein A1">
    <location>
        <begin position="1"/>
        <end position="751"/>
    </location>
</feature>
<feature type="transmembrane region" description="Helical; Name=I" evidence="1">
    <location>
        <begin position="72"/>
        <end position="95"/>
    </location>
</feature>
<feature type="transmembrane region" description="Helical; Name=II" evidence="1">
    <location>
        <begin position="158"/>
        <end position="181"/>
    </location>
</feature>
<feature type="transmembrane region" description="Helical; Name=III" evidence="1">
    <location>
        <begin position="197"/>
        <end position="221"/>
    </location>
</feature>
<feature type="transmembrane region" description="Helical; Name=IV" evidence="1">
    <location>
        <begin position="293"/>
        <end position="311"/>
    </location>
</feature>
<feature type="transmembrane region" description="Helical; Name=V" evidence="1">
    <location>
        <begin position="348"/>
        <end position="371"/>
    </location>
</feature>
<feature type="transmembrane region" description="Helical; Name=VI" evidence="1">
    <location>
        <begin position="387"/>
        <end position="413"/>
    </location>
</feature>
<feature type="transmembrane region" description="Helical; Name=VII" evidence="1">
    <location>
        <begin position="435"/>
        <end position="457"/>
    </location>
</feature>
<feature type="transmembrane region" description="Helical; Name=VIII" evidence="1">
    <location>
        <begin position="532"/>
        <end position="550"/>
    </location>
</feature>
<feature type="transmembrane region" description="Helical; Name=IX" evidence="1">
    <location>
        <begin position="590"/>
        <end position="611"/>
    </location>
</feature>
<feature type="transmembrane region" description="Helical; Name=X" evidence="1">
    <location>
        <begin position="665"/>
        <end position="687"/>
    </location>
</feature>
<feature type="transmembrane region" description="Helical; Name=XI" evidence="1">
    <location>
        <begin position="725"/>
        <end position="745"/>
    </location>
</feature>
<feature type="binding site" evidence="1">
    <location>
        <position position="574"/>
    </location>
    <ligand>
        <name>[4Fe-4S] cluster</name>
        <dbReference type="ChEBI" id="CHEBI:49883"/>
        <note>ligand shared between dimeric partners</note>
    </ligand>
</feature>
<feature type="binding site" evidence="1">
    <location>
        <position position="583"/>
    </location>
    <ligand>
        <name>[4Fe-4S] cluster</name>
        <dbReference type="ChEBI" id="CHEBI:49883"/>
        <note>ligand shared between dimeric partners</note>
    </ligand>
</feature>
<feature type="binding site" description="axial binding residue" evidence="1">
    <location>
        <position position="676"/>
    </location>
    <ligand>
        <name>chlorophyll a'</name>
        <dbReference type="ChEBI" id="CHEBI:189419"/>
        <label>A1</label>
    </ligand>
    <ligandPart>
        <name>Mg</name>
        <dbReference type="ChEBI" id="CHEBI:25107"/>
    </ligandPart>
</feature>
<feature type="binding site" description="axial binding residue" evidence="1">
    <location>
        <position position="684"/>
    </location>
    <ligand>
        <name>chlorophyll a</name>
        <dbReference type="ChEBI" id="CHEBI:58416"/>
        <label>A3</label>
    </ligand>
    <ligandPart>
        <name>Mg</name>
        <dbReference type="ChEBI" id="CHEBI:25107"/>
    </ligandPart>
</feature>
<feature type="binding site" evidence="1">
    <location>
        <position position="692"/>
    </location>
    <ligand>
        <name>chlorophyll a</name>
        <dbReference type="ChEBI" id="CHEBI:58416"/>
        <label>A3</label>
    </ligand>
</feature>
<feature type="binding site" evidence="1">
    <location>
        <position position="693"/>
    </location>
    <ligand>
        <name>phylloquinone</name>
        <dbReference type="ChEBI" id="CHEBI:18067"/>
        <label>A</label>
    </ligand>
</feature>
<accession>B7KC47</accession>
<gene>
    <name evidence="1" type="primary">psaA</name>
    <name type="ordered locus">PCC7424_0403</name>
</gene>
<organism>
    <name type="scientific">Gloeothece citriformis (strain PCC 7424)</name>
    <name type="common">Cyanothece sp. (strain PCC 7424)</name>
    <dbReference type="NCBI Taxonomy" id="65393"/>
    <lineage>
        <taxon>Bacteria</taxon>
        <taxon>Bacillati</taxon>
        <taxon>Cyanobacteriota</taxon>
        <taxon>Cyanophyceae</taxon>
        <taxon>Oscillatoriophycideae</taxon>
        <taxon>Chroococcales</taxon>
        <taxon>Aphanothecaceae</taxon>
        <taxon>Gloeothece</taxon>
        <taxon>Gloeothece citriformis</taxon>
    </lineage>
</organism>
<reference key="1">
    <citation type="journal article" date="2011" name="MBio">
        <title>Novel metabolic attributes of the genus Cyanothece, comprising a group of unicellular nitrogen-fixing Cyanobacteria.</title>
        <authorList>
            <person name="Bandyopadhyay A."/>
            <person name="Elvitigala T."/>
            <person name="Welsh E."/>
            <person name="Stockel J."/>
            <person name="Liberton M."/>
            <person name="Min H."/>
            <person name="Sherman L.A."/>
            <person name="Pakrasi H.B."/>
        </authorList>
    </citation>
    <scope>NUCLEOTIDE SEQUENCE [LARGE SCALE GENOMIC DNA]</scope>
    <source>
        <strain>PCC 7424</strain>
    </source>
</reference>
<sequence length="751" mass="83211">MTISPPEREGKVKVTVDNDPVPTSFEKWGQPGHFDRTLARGPKTTTWIWNLHANAHDFDSQTSDLEDVSRKIFSAHFGHLAVVFVWLSGMYFHGARFSNYEAWLADPTHIKPSAQVVWPIVGQGILNADVGGGFHGIQITSGFFYLWRASGFTNSYQLYCTAIGGLVMAALMLFAGWFHYHKRAPKLEWFQNVESMMNHHLAGLLGLGSLGWAGHQIHVSLPINKLLDAGVAPADIPLPHEFILDPSKMQELYPSFAKGILPFFTLNWGVYSDFLTFKGGLNPVTGGLWLSDTAHHHLAIAVLFIIAGHMYRTNWGIGHSMKQILEAHKGPFTGEGHKGLYEILTTSWHAQLAINLAMLGSLTIIVAHHMYAMPPYPYQAIDYATQLSLFTHHMWIGGFLIVGAGAHGAIFMVRDYKPSQNVDNLLDRVIRHRDAIISHLNWVCIFLGFHSFGLYVHNDTMRALGRPQDMFSDTAIQLQPIFAQWVQNIHTVAPGATAPNALAPASYAFGGDVVAVAGKVAMMPISLGTADFLVHHIHAFTIHVTVLILLKGVLFARSSRLIPDKGQLGFRFPCDGPGRGGTCQVSGWDHVFLGLFWMYNSLSIVIFHFSWKMQSDVWGSVLPDGTISHITGGNFAQSSITINGWLRDFLWAQAANVINSYGSALSAYGIMFLAGHFVFAFSLMFLFSGRGYWQELIESIVWAHNKLRVAPSIQPRALSIIQGRAVGVTHYLLGGIVTTWAFFLARTLSIQ</sequence>
<dbReference type="EC" id="1.97.1.12" evidence="1"/>
<dbReference type="EMBL" id="CP001291">
    <property type="protein sequence ID" value="ACK68870.1"/>
    <property type="molecule type" value="Genomic_DNA"/>
</dbReference>
<dbReference type="RefSeq" id="WP_012597820.1">
    <property type="nucleotide sequence ID" value="NC_011729.1"/>
</dbReference>
<dbReference type="SMR" id="B7KC47"/>
<dbReference type="STRING" id="65393.PCC7424_0403"/>
<dbReference type="KEGG" id="cyc:PCC7424_0403"/>
<dbReference type="eggNOG" id="COG2885">
    <property type="taxonomic scope" value="Bacteria"/>
</dbReference>
<dbReference type="HOGENOM" id="CLU_016126_1_0_3"/>
<dbReference type="OrthoDB" id="499313at2"/>
<dbReference type="Proteomes" id="UP000002384">
    <property type="component" value="Chromosome"/>
</dbReference>
<dbReference type="GO" id="GO:0009522">
    <property type="term" value="C:photosystem I"/>
    <property type="evidence" value="ECO:0007669"/>
    <property type="project" value="UniProtKB-KW"/>
</dbReference>
<dbReference type="GO" id="GO:0031676">
    <property type="term" value="C:plasma membrane-derived thylakoid membrane"/>
    <property type="evidence" value="ECO:0007669"/>
    <property type="project" value="UniProtKB-SubCell"/>
</dbReference>
<dbReference type="GO" id="GO:0051539">
    <property type="term" value="F:4 iron, 4 sulfur cluster binding"/>
    <property type="evidence" value="ECO:0007669"/>
    <property type="project" value="UniProtKB-KW"/>
</dbReference>
<dbReference type="GO" id="GO:0016168">
    <property type="term" value="F:chlorophyll binding"/>
    <property type="evidence" value="ECO:0007669"/>
    <property type="project" value="UniProtKB-KW"/>
</dbReference>
<dbReference type="GO" id="GO:0009055">
    <property type="term" value="F:electron transfer activity"/>
    <property type="evidence" value="ECO:0007669"/>
    <property type="project" value="UniProtKB-UniRule"/>
</dbReference>
<dbReference type="GO" id="GO:0000287">
    <property type="term" value="F:magnesium ion binding"/>
    <property type="evidence" value="ECO:0007669"/>
    <property type="project" value="UniProtKB-UniRule"/>
</dbReference>
<dbReference type="GO" id="GO:0016491">
    <property type="term" value="F:oxidoreductase activity"/>
    <property type="evidence" value="ECO:0007669"/>
    <property type="project" value="UniProtKB-KW"/>
</dbReference>
<dbReference type="GO" id="GO:0015979">
    <property type="term" value="P:photosynthesis"/>
    <property type="evidence" value="ECO:0007669"/>
    <property type="project" value="UniProtKB-UniRule"/>
</dbReference>
<dbReference type="FunFam" id="1.20.1130.10:FF:000001">
    <property type="entry name" value="Photosystem I P700 chlorophyll a apoprotein A2"/>
    <property type="match status" value="1"/>
</dbReference>
<dbReference type="Gene3D" id="1.20.1130.10">
    <property type="entry name" value="Photosystem I PsaA/PsaB"/>
    <property type="match status" value="1"/>
</dbReference>
<dbReference type="HAMAP" id="MF_00458">
    <property type="entry name" value="PSI_PsaA"/>
    <property type="match status" value="1"/>
</dbReference>
<dbReference type="InterPro" id="IPR006243">
    <property type="entry name" value="PSI_PsaA"/>
</dbReference>
<dbReference type="InterPro" id="IPR001280">
    <property type="entry name" value="PSI_PsaA/B"/>
</dbReference>
<dbReference type="InterPro" id="IPR020586">
    <property type="entry name" value="PSI_PsaA/B_CS"/>
</dbReference>
<dbReference type="InterPro" id="IPR036408">
    <property type="entry name" value="PSI_PsaA/B_sf"/>
</dbReference>
<dbReference type="NCBIfam" id="TIGR01335">
    <property type="entry name" value="psaA"/>
    <property type="match status" value="1"/>
</dbReference>
<dbReference type="PANTHER" id="PTHR30128">
    <property type="entry name" value="OUTER MEMBRANE PROTEIN, OMPA-RELATED"/>
    <property type="match status" value="1"/>
</dbReference>
<dbReference type="PANTHER" id="PTHR30128:SF19">
    <property type="entry name" value="PHOTOSYSTEM I P700 CHLOROPHYLL A APOPROTEIN A1-RELATED"/>
    <property type="match status" value="1"/>
</dbReference>
<dbReference type="Pfam" id="PF00223">
    <property type="entry name" value="PsaA_PsaB"/>
    <property type="match status" value="1"/>
</dbReference>
<dbReference type="PIRSF" id="PIRSF002905">
    <property type="entry name" value="PSI_A"/>
    <property type="match status" value="1"/>
</dbReference>
<dbReference type="PRINTS" id="PR00257">
    <property type="entry name" value="PHOTSYSPSAAB"/>
</dbReference>
<dbReference type="SUPFAM" id="SSF81558">
    <property type="entry name" value="Photosystem I subunits PsaA/PsaB"/>
    <property type="match status" value="1"/>
</dbReference>
<dbReference type="PROSITE" id="PS00419">
    <property type="entry name" value="PHOTOSYSTEM_I_PSAAB"/>
    <property type="match status" value="1"/>
</dbReference>
<comment type="function">
    <text evidence="1">PsaA and PsaB bind P700, the primary electron donor of photosystem I (PSI), as well as the electron acceptors A0, A1 and FX. PSI is a plastocyanin/cytochrome c6-ferredoxin oxidoreductase, converting photonic excitation into a charge separation, which transfers an electron from the donor P700 chlorophyll pair to the spectroscopically characterized acceptors A0, A1, FX, FA and FB in turn. Oxidized P700 is reduced on the lumenal side of the thylakoid membrane by plastocyanin or cytochrome c6.</text>
</comment>
<comment type="catalytic activity">
    <reaction evidence="1">
        <text>reduced [plastocyanin] + hnu + oxidized [2Fe-2S]-[ferredoxin] = oxidized [plastocyanin] + reduced [2Fe-2S]-[ferredoxin]</text>
        <dbReference type="Rhea" id="RHEA:30407"/>
        <dbReference type="Rhea" id="RHEA-COMP:10000"/>
        <dbReference type="Rhea" id="RHEA-COMP:10001"/>
        <dbReference type="Rhea" id="RHEA-COMP:10039"/>
        <dbReference type="Rhea" id="RHEA-COMP:10040"/>
        <dbReference type="ChEBI" id="CHEBI:29036"/>
        <dbReference type="ChEBI" id="CHEBI:30212"/>
        <dbReference type="ChEBI" id="CHEBI:33737"/>
        <dbReference type="ChEBI" id="CHEBI:33738"/>
        <dbReference type="ChEBI" id="CHEBI:49552"/>
        <dbReference type="EC" id="1.97.1.12"/>
    </reaction>
</comment>
<comment type="cofactor">
    <text evidence="1">PSI electron transfer chain: 5 chlorophyll a, 1 chlorophyll a', 2 phylloquinones and 3 4Fe-4S clusters. PSI core antenna: 90 chlorophyll a, 22 carotenoids, 3 phospholipids and 1 galactolipid. P700 is a chlorophyll a/chlorophyll a' dimer, A0 is one or more chlorophyll a, A1 is one or both phylloquinones and FX is a shared 4Fe-4S iron-sulfur center.</text>
</comment>
<comment type="subunit">
    <text evidence="1">The PsaA/B heterodimer binds the P700 chlorophyll special pair and subsequent electron acceptors. PSI consists of a core antenna complex that captures photons, and an electron transfer chain that converts photonic excitation into a charge separation. The cyanobacterial PSI reaction center is composed of one copy each of PsaA,B,C,D,E,F,I,J,K,L,M and X, and forms trimeric complexes.</text>
</comment>
<comment type="subcellular location">
    <subcellularLocation>
        <location evidence="1">Cellular thylakoid membrane</location>
        <topology evidence="1">Multi-pass membrane protein</topology>
    </subcellularLocation>
</comment>
<comment type="similarity">
    <text evidence="1">Belongs to the PsaA/PsaB family.</text>
</comment>
<evidence type="ECO:0000255" key="1">
    <source>
        <dbReference type="HAMAP-Rule" id="MF_00458"/>
    </source>
</evidence>
<keyword id="KW-0004">4Fe-4S</keyword>
<keyword id="KW-0148">Chlorophyll</keyword>
<keyword id="KW-0157">Chromophore</keyword>
<keyword id="KW-0249">Electron transport</keyword>
<keyword id="KW-0408">Iron</keyword>
<keyword id="KW-0411">Iron-sulfur</keyword>
<keyword id="KW-0460">Magnesium</keyword>
<keyword id="KW-0472">Membrane</keyword>
<keyword id="KW-0479">Metal-binding</keyword>
<keyword id="KW-0560">Oxidoreductase</keyword>
<keyword id="KW-0602">Photosynthesis</keyword>
<keyword id="KW-0603">Photosystem I</keyword>
<keyword id="KW-1185">Reference proteome</keyword>
<keyword id="KW-0793">Thylakoid</keyword>
<keyword id="KW-0812">Transmembrane</keyword>
<keyword id="KW-1133">Transmembrane helix</keyword>
<keyword id="KW-0813">Transport</keyword>
<name>PSAA_GLOC7</name>